<feature type="chain" id="PRO_1000009711" description="dCTP deaminase, dUMP-forming">
    <location>
        <begin position="1"/>
        <end position="187"/>
    </location>
</feature>
<feature type="active site" description="Proton donor/acceptor" evidence="1">
    <location>
        <position position="129"/>
    </location>
</feature>
<feature type="binding site" evidence="1">
    <location>
        <begin position="101"/>
        <end position="106"/>
    </location>
    <ligand>
        <name>dCTP</name>
        <dbReference type="ChEBI" id="CHEBI:61481"/>
    </ligand>
</feature>
<feature type="binding site" evidence="1">
    <location>
        <position position="119"/>
    </location>
    <ligand>
        <name>dCTP</name>
        <dbReference type="ChEBI" id="CHEBI:61481"/>
    </ligand>
</feature>
<feature type="binding site" evidence="1">
    <location>
        <begin position="127"/>
        <end position="129"/>
    </location>
    <ligand>
        <name>dCTP</name>
        <dbReference type="ChEBI" id="CHEBI:61481"/>
    </ligand>
</feature>
<feature type="binding site" evidence="1">
    <location>
        <position position="148"/>
    </location>
    <ligand>
        <name>dCTP</name>
        <dbReference type="ChEBI" id="CHEBI:61481"/>
    </ligand>
</feature>
<feature type="binding site" evidence="1">
    <location>
        <position position="162"/>
    </location>
    <ligand>
        <name>dCTP</name>
        <dbReference type="ChEBI" id="CHEBI:61481"/>
    </ligand>
</feature>
<feature type="binding site" evidence="1">
    <location>
        <position position="170"/>
    </location>
    <ligand>
        <name>dCTP</name>
        <dbReference type="ChEBI" id="CHEBI:61481"/>
    </ligand>
</feature>
<feature type="binding site" evidence="1">
    <location>
        <position position="174"/>
    </location>
    <ligand>
        <name>dCTP</name>
        <dbReference type="ChEBI" id="CHEBI:61481"/>
    </ligand>
</feature>
<feature type="site" description="Important for bifunctional activity" evidence="1">
    <location>
        <begin position="116"/>
        <end position="117"/>
    </location>
</feature>
<comment type="function">
    <text evidence="1">Bifunctional enzyme that catalyzes both the deamination of dCTP to dUTP and the hydrolysis of dUTP to dUMP without releasing the toxic dUTP intermediate.</text>
</comment>
<comment type="catalytic activity">
    <reaction evidence="1">
        <text>dCTP + 2 H2O = dUMP + NH4(+) + diphosphate</text>
        <dbReference type="Rhea" id="RHEA:19205"/>
        <dbReference type="ChEBI" id="CHEBI:15377"/>
        <dbReference type="ChEBI" id="CHEBI:28938"/>
        <dbReference type="ChEBI" id="CHEBI:33019"/>
        <dbReference type="ChEBI" id="CHEBI:61481"/>
        <dbReference type="ChEBI" id="CHEBI:246422"/>
        <dbReference type="EC" id="3.5.4.30"/>
    </reaction>
</comment>
<comment type="pathway">
    <text evidence="1">Pyrimidine metabolism; dUMP biosynthesis; dUMP from dCTP: step 1/1.</text>
</comment>
<comment type="subunit">
    <text evidence="1">Homotrimer.</text>
</comment>
<comment type="similarity">
    <text evidence="1">Belongs to the dCTP deaminase family.</text>
</comment>
<protein>
    <recommendedName>
        <fullName evidence="1">dCTP deaminase, dUMP-forming</fullName>
        <ecNumber evidence="1">3.5.4.30</ecNumber>
    </recommendedName>
    <alternativeName>
        <fullName evidence="1">Bifunctional dCTP deaminase:dUTPase</fullName>
    </alternativeName>
    <alternativeName>
        <fullName evidence="1">DCD-DUT</fullName>
    </alternativeName>
</protein>
<dbReference type="EC" id="3.5.4.30" evidence="1"/>
<dbReference type="EMBL" id="BX248360">
    <property type="protein sequence ID" value="CAE50672.1"/>
    <property type="molecule type" value="Genomic_DNA"/>
</dbReference>
<dbReference type="RefSeq" id="WP_010935612.1">
    <property type="nucleotide sequence ID" value="NC_002935.2"/>
</dbReference>
<dbReference type="SMR" id="Q6NEW7"/>
<dbReference type="STRING" id="257309.DIP2142"/>
<dbReference type="KEGG" id="cdi:DIP2142"/>
<dbReference type="HOGENOM" id="CLU_087476_2_1_11"/>
<dbReference type="UniPathway" id="UPA00610">
    <property type="reaction ID" value="UER00667"/>
</dbReference>
<dbReference type="Proteomes" id="UP000002198">
    <property type="component" value="Chromosome"/>
</dbReference>
<dbReference type="GO" id="GO:0033973">
    <property type="term" value="F:dCTP deaminase (dUMP-forming) activity"/>
    <property type="evidence" value="ECO:0007669"/>
    <property type="project" value="UniProtKB-UniRule"/>
</dbReference>
<dbReference type="GO" id="GO:0008829">
    <property type="term" value="F:dCTP deaminase activity"/>
    <property type="evidence" value="ECO:0007669"/>
    <property type="project" value="InterPro"/>
</dbReference>
<dbReference type="GO" id="GO:0000166">
    <property type="term" value="F:nucleotide binding"/>
    <property type="evidence" value="ECO:0007669"/>
    <property type="project" value="UniProtKB-KW"/>
</dbReference>
<dbReference type="GO" id="GO:0006226">
    <property type="term" value="P:dUMP biosynthetic process"/>
    <property type="evidence" value="ECO:0007669"/>
    <property type="project" value="UniProtKB-UniRule"/>
</dbReference>
<dbReference type="GO" id="GO:0006229">
    <property type="term" value="P:dUTP biosynthetic process"/>
    <property type="evidence" value="ECO:0007669"/>
    <property type="project" value="InterPro"/>
</dbReference>
<dbReference type="GO" id="GO:0015949">
    <property type="term" value="P:nucleobase-containing small molecule interconversion"/>
    <property type="evidence" value="ECO:0007669"/>
    <property type="project" value="TreeGrafter"/>
</dbReference>
<dbReference type="CDD" id="cd07557">
    <property type="entry name" value="trimeric_dUTPase"/>
    <property type="match status" value="1"/>
</dbReference>
<dbReference type="FunFam" id="2.70.40.10:FF:000005">
    <property type="entry name" value="dCTP deaminase, dUMP-forming"/>
    <property type="match status" value="1"/>
</dbReference>
<dbReference type="Gene3D" id="2.70.40.10">
    <property type="match status" value="1"/>
</dbReference>
<dbReference type="HAMAP" id="MF_00146">
    <property type="entry name" value="dCTP_deaminase"/>
    <property type="match status" value="1"/>
</dbReference>
<dbReference type="InterPro" id="IPR011962">
    <property type="entry name" value="dCTP_deaminase"/>
</dbReference>
<dbReference type="InterPro" id="IPR036157">
    <property type="entry name" value="dUTPase-like_sf"/>
</dbReference>
<dbReference type="InterPro" id="IPR033704">
    <property type="entry name" value="dUTPase_trimeric"/>
</dbReference>
<dbReference type="NCBIfam" id="TIGR02274">
    <property type="entry name" value="dCTP_deam"/>
    <property type="match status" value="1"/>
</dbReference>
<dbReference type="PANTHER" id="PTHR42680">
    <property type="entry name" value="DCTP DEAMINASE"/>
    <property type="match status" value="1"/>
</dbReference>
<dbReference type="PANTHER" id="PTHR42680:SF3">
    <property type="entry name" value="DCTP DEAMINASE"/>
    <property type="match status" value="1"/>
</dbReference>
<dbReference type="Pfam" id="PF22769">
    <property type="entry name" value="DCD"/>
    <property type="match status" value="1"/>
</dbReference>
<dbReference type="SUPFAM" id="SSF51283">
    <property type="entry name" value="dUTPase-like"/>
    <property type="match status" value="1"/>
</dbReference>
<evidence type="ECO:0000255" key="1">
    <source>
        <dbReference type="HAMAP-Rule" id="MF_00146"/>
    </source>
</evidence>
<name>DCDB_CORDI</name>
<reference key="1">
    <citation type="journal article" date="2003" name="Nucleic Acids Res.">
        <title>The complete genome sequence and analysis of Corynebacterium diphtheriae NCTC13129.</title>
        <authorList>
            <person name="Cerdeno-Tarraga A.-M."/>
            <person name="Efstratiou A."/>
            <person name="Dover L.G."/>
            <person name="Holden M.T.G."/>
            <person name="Pallen M.J."/>
            <person name="Bentley S.D."/>
            <person name="Besra G.S."/>
            <person name="Churcher C.M."/>
            <person name="James K.D."/>
            <person name="De Zoysa A."/>
            <person name="Chillingworth T."/>
            <person name="Cronin A."/>
            <person name="Dowd L."/>
            <person name="Feltwell T."/>
            <person name="Hamlin N."/>
            <person name="Holroyd S."/>
            <person name="Jagels K."/>
            <person name="Moule S."/>
            <person name="Quail M.A."/>
            <person name="Rabbinowitsch E."/>
            <person name="Rutherford K.M."/>
            <person name="Thomson N.R."/>
            <person name="Unwin L."/>
            <person name="Whitehead S."/>
            <person name="Barrell B.G."/>
            <person name="Parkhill J."/>
        </authorList>
    </citation>
    <scope>NUCLEOTIDE SEQUENCE [LARGE SCALE GENOMIC DNA]</scope>
    <source>
        <strain>ATCC 700971 / NCTC 13129 / Biotype gravis</strain>
    </source>
</reference>
<keyword id="KW-0378">Hydrolase</keyword>
<keyword id="KW-0546">Nucleotide metabolism</keyword>
<keyword id="KW-0547">Nucleotide-binding</keyword>
<keyword id="KW-1185">Reference proteome</keyword>
<gene>
    <name evidence="1" type="primary">dcd</name>
    <name type="ordered locus">DIP2142</name>
</gene>
<organism>
    <name type="scientific">Corynebacterium diphtheriae (strain ATCC 700971 / NCTC 13129 / Biotype gravis)</name>
    <dbReference type="NCBI Taxonomy" id="257309"/>
    <lineage>
        <taxon>Bacteria</taxon>
        <taxon>Bacillati</taxon>
        <taxon>Actinomycetota</taxon>
        <taxon>Actinomycetes</taxon>
        <taxon>Mycobacteriales</taxon>
        <taxon>Corynebacteriaceae</taxon>
        <taxon>Corynebacterium</taxon>
    </lineage>
</organism>
<sequence length="187" mass="20494">MLYSDKDIRVAIDAGELGIEPFDADLIQPSSIDVRMDRLFRVFNNSKYTHIDPKQQQDELTSLVEVPEGEPFVLHPGEFVLGSTLEKFTLPAHIAGRLEGKSSLGRLGLLTHSTAGFIDPGFSGYITLELSNVANLPITLWPGMKVGQLALFKMTSPAQAPYGSNVLGSKYQGQRGPTPSKAYLNFR</sequence>
<accession>Q6NEW7</accession>
<proteinExistence type="inferred from homology"/>